<evidence type="ECO:0000255" key="1">
    <source>
        <dbReference type="HAMAP-Rule" id="MF_00258"/>
    </source>
</evidence>
<protein>
    <recommendedName>
        <fullName evidence="1">Glutamate racemase</fullName>
        <ecNumber evidence="1">5.1.1.3</ecNumber>
    </recommendedName>
</protein>
<proteinExistence type="inferred from homology"/>
<gene>
    <name evidence="1" type="primary">murI</name>
    <name type="ordered locus">SEN3925</name>
</gene>
<accession>B5QXR2</accession>
<comment type="function">
    <text evidence="1">Provides the (R)-glutamate required for cell wall biosynthesis.</text>
</comment>
<comment type="catalytic activity">
    <reaction evidence="1">
        <text>L-glutamate = D-glutamate</text>
        <dbReference type="Rhea" id="RHEA:12813"/>
        <dbReference type="ChEBI" id="CHEBI:29985"/>
        <dbReference type="ChEBI" id="CHEBI:29986"/>
        <dbReference type="EC" id="5.1.1.3"/>
    </reaction>
</comment>
<comment type="pathway">
    <text evidence="1">Cell wall biogenesis; peptidoglycan biosynthesis.</text>
</comment>
<comment type="similarity">
    <text evidence="1">Belongs to the aspartate/glutamate racemases family.</text>
</comment>
<feature type="chain" id="PRO_1000114061" description="Glutamate racemase">
    <location>
        <begin position="1"/>
        <end position="283"/>
    </location>
</feature>
<feature type="active site" description="Proton donor/acceptor" evidence="1">
    <location>
        <position position="92"/>
    </location>
</feature>
<feature type="active site" description="Proton donor/acceptor" evidence="1">
    <location>
        <position position="204"/>
    </location>
</feature>
<feature type="binding site" evidence="1">
    <location>
        <begin position="28"/>
        <end position="29"/>
    </location>
    <ligand>
        <name>substrate</name>
    </ligand>
</feature>
<feature type="binding site" evidence="1">
    <location>
        <begin position="60"/>
        <end position="61"/>
    </location>
    <ligand>
        <name>substrate</name>
    </ligand>
</feature>
<feature type="binding site" evidence="1">
    <location>
        <begin position="93"/>
        <end position="94"/>
    </location>
    <ligand>
        <name>substrate</name>
    </ligand>
</feature>
<feature type="binding site" evidence="1">
    <location>
        <begin position="205"/>
        <end position="206"/>
    </location>
    <ligand>
        <name>substrate</name>
    </ligand>
</feature>
<reference key="1">
    <citation type="journal article" date="2008" name="Genome Res.">
        <title>Comparative genome analysis of Salmonella enteritidis PT4 and Salmonella gallinarum 287/91 provides insights into evolutionary and host adaptation pathways.</title>
        <authorList>
            <person name="Thomson N.R."/>
            <person name="Clayton D.J."/>
            <person name="Windhorst D."/>
            <person name="Vernikos G."/>
            <person name="Davidson S."/>
            <person name="Churcher C."/>
            <person name="Quail M.A."/>
            <person name="Stevens M."/>
            <person name="Jones M.A."/>
            <person name="Watson M."/>
            <person name="Barron A."/>
            <person name="Layton A."/>
            <person name="Pickard D."/>
            <person name="Kingsley R.A."/>
            <person name="Bignell A."/>
            <person name="Clark L."/>
            <person name="Harris B."/>
            <person name="Ormond D."/>
            <person name="Abdellah Z."/>
            <person name="Brooks K."/>
            <person name="Cherevach I."/>
            <person name="Chillingworth T."/>
            <person name="Woodward J."/>
            <person name="Norberczak H."/>
            <person name="Lord A."/>
            <person name="Arrowsmith C."/>
            <person name="Jagels K."/>
            <person name="Moule S."/>
            <person name="Mungall K."/>
            <person name="Saunders M."/>
            <person name="Whitehead S."/>
            <person name="Chabalgoity J.A."/>
            <person name="Maskell D."/>
            <person name="Humphreys T."/>
            <person name="Roberts M."/>
            <person name="Barrow P.A."/>
            <person name="Dougan G."/>
            <person name="Parkhill J."/>
        </authorList>
    </citation>
    <scope>NUCLEOTIDE SEQUENCE [LARGE SCALE GENOMIC DNA]</scope>
    <source>
        <strain>P125109</strain>
    </source>
</reference>
<name>MURI_SALEP</name>
<dbReference type="EC" id="5.1.1.3" evidence="1"/>
<dbReference type="EMBL" id="AM933172">
    <property type="protein sequence ID" value="CAR35497.1"/>
    <property type="molecule type" value="Genomic_DNA"/>
</dbReference>
<dbReference type="RefSeq" id="WP_000201805.1">
    <property type="nucleotide sequence ID" value="NC_011294.1"/>
</dbReference>
<dbReference type="SMR" id="B5QXR2"/>
<dbReference type="KEGG" id="set:SEN3925"/>
<dbReference type="HOGENOM" id="CLU_052344_2_0_6"/>
<dbReference type="UniPathway" id="UPA00219"/>
<dbReference type="Proteomes" id="UP000000613">
    <property type="component" value="Chromosome"/>
</dbReference>
<dbReference type="GO" id="GO:0008881">
    <property type="term" value="F:glutamate racemase activity"/>
    <property type="evidence" value="ECO:0007669"/>
    <property type="project" value="UniProtKB-UniRule"/>
</dbReference>
<dbReference type="GO" id="GO:0071555">
    <property type="term" value="P:cell wall organization"/>
    <property type="evidence" value="ECO:0007669"/>
    <property type="project" value="UniProtKB-KW"/>
</dbReference>
<dbReference type="GO" id="GO:0009252">
    <property type="term" value="P:peptidoglycan biosynthetic process"/>
    <property type="evidence" value="ECO:0007669"/>
    <property type="project" value="UniProtKB-UniRule"/>
</dbReference>
<dbReference type="GO" id="GO:0008360">
    <property type="term" value="P:regulation of cell shape"/>
    <property type="evidence" value="ECO:0007669"/>
    <property type="project" value="UniProtKB-KW"/>
</dbReference>
<dbReference type="FunFam" id="3.40.50.1860:FF:000002">
    <property type="entry name" value="Glutamate racemase"/>
    <property type="match status" value="1"/>
</dbReference>
<dbReference type="Gene3D" id="3.40.50.1860">
    <property type="match status" value="2"/>
</dbReference>
<dbReference type="HAMAP" id="MF_00258">
    <property type="entry name" value="Glu_racemase"/>
    <property type="match status" value="1"/>
</dbReference>
<dbReference type="InterPro" id="IPR015942">
    <property type="entry name" value="Asp/Glu/hydantoin_racemase"/>
</dbReference>
<dbReference type="InterPro" id="IPR001920">
    <property type="entry name" value="Asp/Glu_race"/>
</dbReference>
<dbReference type="InterPro" id="IPR018187">
    <property type="entry name" value="Asp/Glu_racemase_AS_1"/>
</dbReference>
<dbReference type="InterPro" id="IPR033134">
    <property type="entry name" value="Asp/Glu_racemase_AS_2"/>
</dbReference>
<dbReference type="InterPro" id="IPR004391">
    <property type="entry name" value="Glu_race"/>
</dbReference>
<dbReference type="NCBIfam" id="TIGR00067">
    <property type="entry name" value="glut_race"/>
    <property type="match status" value="1"/>
</dbReference>
<dbReference type="NCBIfam" id="NF002034">
    <property type="entry name" value="PRK00865.1-1"/>
    <property type="match status" value="1"/>
</dbReference>
<dbReference type="PANTHER" id="PTHR21198">
    <property type="entry name" value="GLUTAMATE RACEMASE"/>
    <property type="match status" value="1"/>
</dbReference>
<dbReference type="PANTHER" id="PTHR21198:SF2">
    <property type="entry name" value="GLUTAMATE RACEMASE"/>
    <property type="match status" value="1"/>
</dbReference>
<dbReference type="Pfam" id="PF01177">
    <property type="entry name" value="Asp_Glu_race"/>
    <property type="match status" value="1"/>
</dbReference>
<dbReference type="SUPFAM" id="SSF53681">
    <property type="entry name" value="Aspartate/glutamate racemase"/>
    <property type="match status" value="2"/>
</dbReference>
<dbReference type="PROSITE" id="PS00923">
    <property type="entry name" value="ASP_GLU_RACEMASE_1"/>
    <property type="match status" value="1"/>
</dbReference>
<dbReference type="PROSITE" id="PS00924">
    <property type="entry name" value="ASP_GLU_RACEMASE_2"/>
    <property type="match status" value="1"/>
</dbReference>
<keyword id="KW-0133">Cell shape</keyword>
<keyword id="KW-0961">Cell wall biogenesis/degradation</keyword>
<keyword id="KW-0413">Isomerase</keyword>
<keyword id="KW-0573">Peptidoglycan synthesis</keyword>
<organism>
    <name type="scientific">Salmonella enteritidis PT4 (strain P125109)</name>
    <dbReference type="NCBI Taxonomy" id="550537"/>
    <lineage>
        <taxon>Bacteria</taxon>
        <taxon>Pseudomonadati</taxon>
        <taxon>Pseudomonadota</taxon>
        <taxon>Gammaproteobacteria</taxon>
        <taxon>Enterobacterales</taxon>
        <taxon>Enterobacteriaceae</taxon>
        <taxon>Salmonella</taxon>
    </lineage>
</organism>
<sequence>MATKLQDENTPCLAATPSEPRPTVLVFDSGVGGLSVYDEIRRLLPDLHYIYAFDNVAFPYGEKSETFIVERVVEIVTAVQQRYPLSLAVIACNTASTVSLPALREKFAFPVVGVVPAIKPAARLTANGVVGLLATRATVKRPYTHELIARFANECQIAMLGSAELVELAEAKLHGDSVSLEELRRILRPWLRMPEPPDTVVLGCTHFPLLRDELLQVLPEGTRLVDSGAAIARRTAWLLEHEAPDAKSTDANIAYCMAMTPGAEQLLPVLQRYGFETLEKLPV</sequence>